<sequence>MTRPLAPGFHIPPDLLLRAYATGVFPMAEHADDPEVFWVRPEMRGIIPLDKFHVPKSLRKLLRRQPYEVRYDTDFTGVIDACAEPSAERAETWINEPIRVAYTELFKRGHCHTVEAWREGKLVGGLYGVSLGRAFFGESMFSREPNASKICLVHLVERLKAGGFLLLDTQFTTDHLRRFGAIDVPRRRYEQMLAEALEETAKF</sequence>
<evidence type="ECO:0000255" key="1">
    <source>
        <dbReference type="HAMAP-Rule" id="MF_00688"/>
    </source>
</evidence>
<feature type="chain" id="PRO_0000258065" description="Leucyl/phenylalanyl-tRNA--protein transferase">
    <location>
        <begin position="1"/>
        <end position="203"/>
    </location>
</feature>
<keyword id="KW-0012">Acyltransferase</keyword>
<keyword id="KW-0963">Cytoplasm</keyword>
<keyword id="KW-0808">Transferase</keyword>
<dbReference type="EC" id="2.3.2.6" evidence="1"/>
<dbReference type="EMBL" id="CP000390">
    <property type="protein sequence ID" value="ABG63112.1"/>
    <property type="molecule type" value="Genomic_DNA"/>
</dbReference>
<dbReference type="SMR" id="Q11HL3"/>
<dbReference type="STRING" id="266779.Meso_1717"/>
<dbReference type="KEGG" id="mes:Meso_1717"/>
<dbReference type="eggNOG" id="COG2360">
    <property type="taxonomic scope" value="Bacteria"/>
</dbReference>
<dbReference type="HOGENOM" id="CLU_075045_1_1_5"/>
<dbReference type="OrthoDB" id="9790282at2"/>
<dbReference type="GO" id="GO:0005737">
    <property type="term" value="C:cytoplasm"/>
    <property type="evidence" value="ECO:0007669"/>
    <property type="project" value="UniProtKB-SubCell"/>
</dbReference>
<dbReference type="GO" id="GO:0008914">
    <property type="term" value="F:leucyl-tRNA--protein transferase activity"/>
    <property type="evidence" value="ECO:0007669"/>
    <property type="project" value="UniProtKB-UniRule"/>
</dbReference>
<dbReference type="GO" id="GO:0030163">
    <property type="term" value="P:protein catabolic process"/>
    <property type="evidence" value="ECO:0007669"/>
    <property type="project" value="UniProtKB-UniRule"/>
</dbReference>
<dbReference type="FunFam" id="3.40.630.70:FF:000001">
    <property type="entry name" value="Leucyl/phenylalanyl-tRNA--protein transferase"/>
    <property type="match status" value="1"/>
</dbReference>
<dbReference type="Gene3D" id="3.40.630.70">
    <property type="entry name" value="Leucyl/phenylalanyl-tRNA-protein transferase, C-terminal domain"/>
    <property type="match status" value="1"/>
</dbReference>
<dbReference type="HAMAP" id="MF_00688">
    <property type="entry name" value="Leu_Phe_trans"/>
    <property type="match status" value="1"/>
</dbReference>
<dbReference type="InterPro" id="IPR016181">
    <property type="entry name" value="Acyl_CoA_acyltransferase"/>
</dbReference>
<dbReference type="InterPro" id="IPR004616">
    <property type="entry name" value="Leu/Phe-tRNA_Trfase"/>
</dbReference>
<dbReference type="InterPro" id="IPR042203">
    <property type="entry name" value="Leu/Phe-tRNA_Trfase_C"/>
</dbReference>
<dbReference type="NCBIfam" id="TIGR00667">
    <property type="entry name" value="aat"/>
    <property type="match status" value="1"/>
</dbReference>
<dbReference type="PANTHER" id="PTHR30098">
    <property type="entry name" value="LEUCYL/PHENYLALANYL-TRNA--PROTEIN TRANSFERASE"/>
    <property type="match status" value="1"/>
</dbReference>
<dbReference type="PANTHER" id="PTHR30098:SF2">
    <property type="entry name" value="LEUCYL_PHENYLALANYL-TRNA--PROTEIN TRANSFERASE"/>
    <property type="match status" value="1"/>
</dbReference>
<dbReference type="Pfam" id="PF03588">
    <property type="entry name" value="Leu_Phe_trans"/>
    <property type="match status" value="1"/>
</dbReference>
<dbReference type="SUPFAM" id="SSF55729">
    <property type="entry name" value="Acyl-CoA N-acyltransferases (Nat)"/>
    <property type="match status" value="1"/>
</dbReference>
<gene>
    <name evidence="1" type="primary">aat</name>
    <name type="ordered locus">Meso_1717</name>
</gene>
<accession>Q11HL3</accession>
<comment type="function">
    <text evidence="1">Functions in the N-end rule pathway of protein degradation where it conjugates Leu, Phe and, less efficiently, Met from aminoacyl-tRNAs to the N-termini of proteins containing an N-terminal arginine or lysine.</text>
</comment>
<comment type="catalytic activity">
    <reaction evidence="1">
        <text>N-terminal L-lysyl-[protein] + L-leucyl-tRNA(Leu) = N-terminal L-leucyl-L-lysyl-[protein] + tRNA(Leu) + H(+)</text>
        <dbReference type="Rhea" id="RHEA:12340"/>
        <dbReference type="Rhea" id="RHEA-COMP:9613"/>
        <dbReference type="Rhea" id="RHEA-COMP:9622"/>
        <dbReference type="Rhea" id="RHEA-COMP:12670"/>
        <dbReference type="Rhea" id="RHEA-COMP:12671"/>
        <dbReference type="ChEBI" id="CHEBI:15378"/>
        <dbReference type="ChEBI" id="CHEBI:65249"/>
        <dbReference type="ChEBI" id="CHEBI:78442"/>
        <dbReference type="ChEBI" id="CHEBI:78494"/>
        <dbReference type="ChEBI" id="CHEBI:133043"/>
        <dbReference type="EC" id="2.3.2.6"/>
    </reaction>
</comment>
<comment type="catalytic activity">
    <reaction evidence="1">
        <text>N-terminal L-arginyl-[protein] + L-leucyl-tRNA(Leu) = N-terminal L-leucyl-L-arginyl-[protein] + tRNA(Leu) + H(+)</text>
        <dbReference type="Rhea" id="RHEA:50416"/>
        <dbReference type="Rhea" id="RHEA-COMP:9613"/>
        <dbReference type="Rhea" id="RHEA-COMP:9622"/>
        <dbReference type="Rhea" id="RHEA-COMP:12672"/>
        <dbReference type="Rhea" id="RHEA-COMP:12673"/>
        <dbReference type="ChEBI" id="CHEBI:15378"/>
        <dbReference type="ChEBI" id="CHEBI:64719"/>
        <dbReference type="ChEBI" id="CHEBI:78442"/>
        <dbReference type="ChEBI" id="CHEBI:78494"/>
        <dbReference type="ChEBI" id="CHEBI:133044"/>
        <dbReference type="EC" id="2.3.2.6"/>
    </reaction>
</comment>
<comment type="catalytic activity">
    <reaction evidence="1">
        <text>L-phenylalanyl-tRNA(Phe) + an N-terminal L-alpha-aminoacyl-[protein] = an N-terminal L-phenylalanyl-L-alpha-aminoacyl-[protein] + tRNA(Phe)</text>
        <dbReference type="Rhea" id="RHEA:43632"/>
        <dbReference type="Rhea" id="RHEA-COMP:9668"/>
        <dbReference type="Rhea" id="RHEA-COMP:9699"/>
        <dbReference type="Rhea" id="RHEA-COMP:10636"/>
        <dbReference type="Rhea" id="RHEA-COMP:10637"/>
        <dbReference type="ChEBI" id="CHEBI:78442"/>
        <dbReference type="ChEBI" id="CHEBI:78531"/>
        <dbReference type="ChEBI" id="CHEBI:78597"/>
        <dbReference type="ChEBI" id="CHEBI:83561"/>
        <dbReference type="EC" id="2.3.2.6"/>
    </reaction>
</comment>
<comment type="subcellular location">
    <subcellularLocation>
        <location evidence="1">Cytoplasm</location>
    </subcellularLocation>
</comment>
<comment type="similarity">
    <text evidence="1">Belongs to the L/F-transferase family.</text>
</comment>
<organism>
    <name type="scientific">Chelativorans sp. (strain BNC1)</name>
    <dbReference type="NCBI Taxonomy" id="266779"/>
    <lineage>
        <taxon>Bacteria</taxon>
        <taxon>Pseudomonadati</taxon>
        <taxon>Pseudomonadota</taxon>
        <taxon>Alphaproteobacteria</taxon>
        <taxon>Hyphomicrobiales</taxon>
        <taxon>Phyllobacteriaceae</taxon>
        <taxon>Chelativorans</taxon>
    </lineage>
</organism>
<name>LFTR_CHESB</name>
<proteinExistence type="inferred from homology"/>
<protein>
    <recommendedName>
        <fullName evidence="1">Leucyl/phenylalanyl-tRNA--protein transferase</fullName>
        <ecNumber evidence="1">2.3.2.6</ecNumber>
    </recommendedName>
    <alternativeName>
        <fullName evidence="1">L/F-transferase</fullName>
    </alternativeName>
    <alternativeName>
        <fullName evidence="1">Leucyltransferase</fullName>
    </alternativeName>
    <alternativeName>
        <fullName evidence="1">Phenyalanyltransferase</fullName>
    </alternativeName>
</protein>
<reference key="1">
    <citation type="submission" date="2006-06" db="EMBL/GenBank/DDBJ databases">
        <title>Complete sequence of chromosome of Mesorhizobium sp. BNC1.</title>
        <authorList>
            <consortium name="US DOE Joint Genome Institute"/>
            <person name="Copeland A."/>
            <person name="Lucas S."/>
            <person name="Lapidus A."/>
            <person name="Barry K."/>
            <person name="Detter J.C."/>
            <person name="Glavina del Rio T."/>
            <person name="Hammon N."/>
            <person name="Israni S."/>
            <person name="Dalin E."/>
            <person name="Tice H."/>
            <person name="Pitluck S."/>
            <person name="Chertkov O."/>
            <person name="Brettin T."/>
            <person name="Bruce D."/>
            <person name="Han C."/>
            <person name="Tapia R."/>
            <person name="Gilna P."/>
            <person name="Schmutz J."/>
            <person name="Larimer F."/>
            <person name="Land M."/>
            <person name="Hauser L."/>
            <person name="Kyrpides N."/>
            <person name="Mikhailova N."/>
            <person name="Richardson P."/>
        </authorList>
    </citation>
    <scope>NUCLEOTIDE SEQUENCE [LARGE SCALE GENOMIC DNA]</scope>
    <source>
        <strain>BNC1</strain>
    </source>
</reference>